<keyword id="KW-0030">Aminoacyl-tRNA synthetase</keyword>
<keyword id="KW-0067">ATP-binding</keyword>
<keyword id="KW-0963">Cytoplasm</keyword>
<keyword id="KW-0436">Ligase</keyword>
<keyword id="KW-0479">Metal-binding</keyword>
<keyword id="KW-0547">Nucleotide-binding</keyword>
<keyword id="KW-0648">Protein biosynthesis</keyword>
<keyword id="KW-0862">Zinc</keyword>
<comment type="catalytic activity">
    <reaction evidence="1">
        <text>tRNA(Cys) + L-cysteine + ATP = L-cysteinyl-tRNA(Cys) + AMP + diphosphate</text>
        <dbReference type="Rhea" id="RHEA:17773"/>
        <dbReference type="Rhea" id="RHEA-COMP:9661"/>
        <dbReference type="Rhea" id="RHEA-COMP:9679"/>
        <dbReference type="ChEBI" id="CHEBI:30616"/>
        <dbReference type="ChEBI" id="CHEBI:33019"/>
        <dbReference type="ChEBI" id="CHEBI:35235"/>
        <dbReference type="ChEBI" id="CHEBI:78442"/>
        <dbReference type="ChEBI" id="CHEBI:78517"/>
        <dbReference type="ChEBI" id="CHEBI:456215"/>
        <dbReference type="EC" id="6.1.1.16"/>
    </reaction>
</comment>
<comment type="cofactor">
    <cofactor evidence="1">
        <name>Zn(2+)</name>
        <dbReference type="ChEBI" id="CHEBI:29105"/>
    </cofactor>
    <text evidence="1">Binds 1 zinc ion per subunit.</text>
</comment>
<comment type="subunit">
    <text evidence="1">Monomer.</text>
</comment>
<comment type="subcellular location">
    <subcellularLocation>
        <location evidence="1">Cytoplasm</location>
    </subcellularLocation>
</comment>
<comment type="similarity">
    <text evidence="1">Belongs to the class-I aminoacyl-tRNA synthetase family.</text>
</comment>
<accession>Q5L546</accession>
<gene>
    <name evidence="1" type="primary">cysS</name>
    <name type="ordered locus">CAB806</name>
</gene>
<organism>
    <name type="scientific">Chlamydia abortus (strain DSM 27085 / S26/3)</name>
    <name type="common">Chlamydophila abortus</name>
    <dbReference type="NCBI Taxonomy" id="218497"/>
    <lineage>
        <taxon>Bacteria</taxon>
        <taxon>Pseudomonadati</taxon>
        <taxon>Chlamydiota</taxon>
        <taxon>Chlamydiia</taxon>
        <taxon>Chlamydiales</taxon>
        <taxon>Chlamydiaceae</taxon>
        <taxon>Chlamydia/Chlamydophila group</taxon>
        <taxon>Chlamydia</taxon>
    </lineage>
</organism>
<reference key="1">
    <citation type="journal article" date="2005" name="Genome Res.">
        <title>The Chlamydophila abortus genome sequence reveals an array of variable proteins that contribute to interspecies variation.</title>
        <authorList>
            <person name="Thomson N.R."/>
            <person name="Yeats C."/>
            <person name="Bell K."/>
            <person name="Holden M.T.G."/>
            <person name="Bentley S.D."/>
            <person name="Livingstone M."/>
            <person name="Cerdeno-Tarraga A.-M."/>
            <person name="Harris B."/>
            <person name="Doggett J."/>
            <person name="Ormond D."/>
            <person name="Mungall K."/>
            <person name="Clarke K."/>
            <person name="Feltwell T."/>
            <person name="Hance Z."/>
            <person name="Sanders M."/>
            <person name="Quail M.A."/>
            <person name="Price C."/>
            <person name="Barrell B.G."/>
            <person name="Parkhill J."/>
            <person name="Longbottom D."/>
        </authorList>
    </citation>
    <scope>NUCLEOTIDE SEQUENCE [LARGE SCALE GENOMIC DNA]</scope>
    <source>
        <strain>DSM 27085 / S26/3</strain>
    </source>
</reference>
<evidence type="ECO:0000255" key="1">
    <source>
        <dbReference type="HAMAP-Rule" id="MF_00041"/>
    </source>
</evidence>
<proteinExistence type="inferred from homology"/>
<protein>
    <recommendedName>
        <fullName evidence="1">Cysteine--tRNA ligase</fullName>
        <ecNumber evidence="1">6.1.1.16</ecNumber>
    </recommendedName>
    <alternativeName>
        <fullName evidence="1">Cysteinyl-tRNA synthetase</fullName>
        <shortName evidence="1">CysRS</shortName>
    </alternativeName>
</protein>
<name>SYC_CHLAB</name>
<dbReference type="EC" id="6.1.1.16" evidence="1"/>
<dbReference type="EMBL" id="CR848038">
    <property type="protein sequence ID" value="CAH64248.1"/>
    <property type="molecule type" value="Genomic_DNA"/>
</dbReference>
<dbReference type="RefSeq" id="WP_011097343.1">
    <property type="nucleotide sequence ID" value="NC_004552.2"/>
</dbReference>
<dbReference type="SMR" id="Q5L546"/>
<dbReference type="KEGG" id="cab:CAB806"/>
<dbReference type="eggNOG" id="COG0215">
    <property type="taxonomic scope" value="Bacteria"/>
</dbReference>
<dbReference type="HOGENOM" id="CLU_013528_0_1_0"/>
<dbReference type="OrthoDB" id="9815130at2"/>
<dbReference type="Proteomes" id="UP000001012">
    <property type="component" value="Chromosome"/>
</dbReference>
<dbReference type="GO" id="GO:0005829">
    <property type="term" value="C:cytosol"/>
    <property type="evidence" value="ECO:0007669"/>
    <property type="project" value="TreeGrafter"/>
</dbReference>
<dbReference type="GO" id="GO:0005524">
    <property type="term" value="F:ATP binding"/>
    <property type="evidence" value="ECO:0007669"/>
    <property type="project" value="UniProtKB-UniRule"/>
</dbReference>
<dbReference type="GO" id="GO:0004817">
    <property type="term" value="F:cysteine-tRNA ligase activity"/>
    <property type="evidence" value="ECO:0007669"/>
    <property type="project" value="UniProtKB-UniRule"/>
</dbReference>
<dbReference type="GO" id="GO:0008270">
    <property type="term" value="F:zinc ion binding"/>
    <property type="evidence" value="ECO:0007669"/>
    <property type="project" value="UniProtKB-UniRule"/>
</dbReference>
<dbReference type="GO" id="GO:0006423">
    <property type="term" value="P:cysteinyl-tRNA aminoacylation"/>
    <property type="evidence" value="ECO:0007669"/>
    <property type="project" value="UniProtKB-UniRule"/>
</dbReference>
<dbReference type="CDD" id="cd00672">
    <property type="entry name" value="CysRS_core"/>
    <property type="match status" value="1"/>
</dbReference>
<dbReference type="FunFam" id="3.40.50.620:FF:000130">
    <property type="entry name" value="Cysteine--tRNA ligase"/>
    <property type="match status" value="1"/>
</dbReference>
<dbReference type="Gene3D" id="1.20.120.1910">
    <property type="entry name" value="Cysteine-tRNA ligase, C-terminal anti-codon recognition domain"/>
    <property type="match status" value="1"/>
</dbReference>
<dbReference type="Gene3D" id="3.40.50.620">
    <property type="entry name" value="HUPs"/>
    <property type="match status" value="1"/>
</dbReference>
<dbReference type="HAMAP" id="MF_00041">
    <property type="entry name" value="Cys_tRNA_synth"/>
    <property type="match status" value="1"/>
</dbReference>
<dbReference type="InterPro" id="IPR015803">
    <property type="entry name" value="Cys-tRNA-ligase"/>
</dbReference>
<dbReference type="InterPro" id="IPR015273">
    <property type="entry name" value="Cys-tRNA-synt_Ia_DALR"/>
</dbReference>
<dbReference type="InterPro" id="IPR024909">
    <property type="entry name" value="Cys-tRNA/MSH_ligase"/>
</dbReference>
<dbReference type="InterPro" id="IPR056411">
    <property type="entry name" value="CysS_C"/>
</dbReference>
<dbReference type="InterPro" id="IPR014729">
    <property type="entry name" value="Rossmann-like_a/b/a_fold"/>
</dbReference>
<dbReference type="InterPro" id="IPR032678">
    <property type="entry name" value="tRNA-synt_1_cat_dom"/>
</dbReference>
<dbReference type="InterPro" id="IPR009080">
    <property type="entry name" value="tRNAsynth_Ia_anticodon-bd"/>
</dbReference>
<dbReference type="NCBIfam" id="TIGR00435">
    <property type="entry name" value="cysS"/>
    <property type="match status" value="1"/>
</dbReference>
<dbReference type="PANTHER" id="PTHR10890:SF3">
    <property type="entry name" value="CYSTEINE--TRNA LIGASE, CYTOPLASMIC"/>
    <property type="match status" value="1"/>
</dbReference>
<dbReference type="PANTHER" id="PTHR10890">
    <property type="entry name" value="CYSTEINYL-TRNA SYNTHETASE"/>
    <property type="match status" value="1"/>
</dbReference>
<dbReference type="Pfam" id="PF23493">
    <property type="entry name" value="CysS_C"/>
    <property type="match status" value="1"/>
</dbReference>
<dbReference type="Pfam" id="PF09190">
    <property type="entry name" value="DALR_2"/>
    <property type="match status" value="1"/>
</dbReference>
<dbReference type="Pfam" id="PF01406">
    <property type="entry name" value="tRNA-synt_1e"/>
    <property type="match status" value="1"/>
</dbReference>
<dbReference type="PRINTS" id="PR00983">
    <property type="entry name" value="TRNASYNTHCYS"/>
</dbReference>
<dbReference type="SMART" id="SM00840">
    <property type="entry name" value="DALR_2"/>
    <property type="match status" value="1"/>
</dbReference>
<dbReference type="SUPFAM" id="SSF47323">
    <property type="entry name" value="Anticodon-binding domain of a subclass of class I aminoacyl-tRNA synthetases"/>
    <property type="match status" value="1"/>
</dbReference>
<dbReference type="SUPFAM" id="SSF52374">
    <property type="entry name" value="Nucleotidylyl transferase"/>
    <property type="match status" value="1"/>
</dbReference>
<feature type="chain" id="PRO_0000240901" description="Cysteine--tRNA ligase">
    <location>
        <begin position="1"/>
        <end position="476"/>
    </location>
</feature>
<feature type="short sequence motif" description="'HIGH' region">
    <location>
        <begin position="38"/>
        <end position="48"/>
    </location>
</feature>
<feature type="short sequence motif" description="'KMSKS' region">
    <location>
        <begin position="278"/>
        <end position="282"/>
    </location>
</feature>
<feature type="binding site" evidence="1">
    <location>
        <position position="36"/>
    </location>
    <ligand>
        <name>Zn(2+)</name>
        <dbReference type="ChEBI" id="CHEBI:29105"/>
    </ligand>
</feature>
<feature type="binding site" evidence="1">
    <location>
        <position position="221"/>
    </location>
    <ligand>
        <name>Zn(2+)</name>
        <dbReference type="ChEBI" id="CHEBI:29105"/>
    </ligand>
</feature>
<feature type="binding site" evidence="1">
    <location>
        <position position="246"/>
    </location>
    <ligand>
        <name>Zn(2+)</name>
        <dbReference type="ChEBI" id="CHEBI:29105"/>
    </ligand>
</feature>
<feature type="binding site" evidence="1">
    <location>
        <position position="250"/>
    </location>
    <ligand>
        <name>Zn(2+)</name>
        <dbReference type="ChEBI" id="CHEBI:29105"/>
    </ligand>
</feature>
<feature type="binding site" evidence="1">
    <location>
        <position position="281"/>
    </location>
    <ligand>
        <name>ATP</name>
        <dbReference type="ChEBI" id="CHEBI:30616"/>
    </ligand>
</feature>
<sequence>MRQSSDNRQNLYLYNTASRTKELFSPSNDPVKLYTCGPTVYDYAHIGNFRTYIFEDLLKRILLFFGYSVKHVMNITDVDDKTLAGACKNNISLDTYTAPFIQAFFKDVATLHILPADAYPRATHYIPQMLVAIRKLLDDGIAYIGQDHSVYFSIKEFPSYGKLSQLQLQNLQCCSRIASDEYDKENLSDFVLWKAYDKHRDGHIYWESPFGKGRPGWHLECSIMAMELLGPSIDIHAGGVDNIFPHHENEIAQSESLSHQPFSRYWLHSEHLLVDGKKMSKSLGNFFTLRNLLDRGFSGAEIRYMLLQSHYRMQLNFTEEGLMACRQALKRLRDFISRLESPYPESATISEGIDQCGQRFLQDFSNAIANDLNIAAALASLFDFIHQTNSRIDQSHFTQADSHYVLDILKKINTVLGVIPFSTSLEIPSEVARLVEEREIARKEKNWKQADVLRNQIASFGYVVEDTKSGPKVKKY</sequence>